<reference key="1">
    <citation type="journal article" date="2005" name="Nature">
        <title>Sequencing of Aspergillus nidulans and comparative analysis with A. fumigatus and A. oryzae.</title>
        <authorList>
            <person name="Galagan J.E."/>
            <person name="Calvo S.E."/>
            <person name="Cuomo C."/>
            <person name="Ma L.-J."/>
            <person name="Wortman J.R."/>
            <person name="Batzoglou S."/>
            <person name="Lee S.-I."/>
            <person name="Bastuerkmen M."/>
            <person name="Spevak C.C."/>
            <person name="Clutterbuck J."/>
            <person name="Kapitonov V."/>
            <person name="Jurka J."/>
            <person name="Scazzocchio C."/>
            <person name="Farman M.L."/>
            <person name="Butler J."/>
            <person name="Purcell S."/>
            <person name="Harris S."/>
            <person name="Braus G.H."/>
            <person name="Draht O."/>
            <person name="Busch S."/>
            <person name="D'Enfert C."/>
            <person name="Bouchier C."/>
            <person name="Goldman G.H."/>
            <person name="Bell-Pedersen D."/>
            <person name="Griffiths-Jones S."/>
            <person name="Doonan J.H."/>
            <person name="Yu J."/>
            <person name="Vienken K."/>
            <person name="Pain A."/>
            <person name="Freitag M."/>
            <person name="Selker E.U."/>
            <person name="Archer D.B."/>
            <person name="Penalva M.A."/>
            <person name="Oakley B.R."/>
            <person name="Momany M."/>
            <person name="Tanaka T."/>
            <person name="Kumagai T."/>
            <person name="Asai K."/>
            <person name="Machida M."/>
            <person name="Nierman W.C."/>
            <person name="Denning D.W."/>
            <person name="Caddick M.X."/>
            <person name="Hynes M."/>
            <person name="Paoletti M."/>
            <person name="Fischer R."/>
            <person name="Miller B.L."/>
            <person name="Dyer P.S."/>
            <person name="Sachs M.S."/>
            <person name="Osmani S.A."/>
            <person name="Birren B.W."/>
        </authorList>
    </citation>
    <scope>NUCLEOTIDE SEQUENCE [LARGE SCALE GENOMIC DNA]</scope>
    <source>
        <strain>FGSC A4 / ATCC 38163 / CBS 112.46 / NRRL 194 / M139</strain>
    </source>
</reference>
<reference key="2">
    <citation type="journal article" date="2009" name="Fungal Genet. Biol.">
        <title>The 2008 update of the Aspergillus nidulans genome annotation: a community effort.</title>
        <authorList>
            <person name="Wortman J.R."/>
            <person name="Gilsenan J.M."/>
            <person name="Joardar V."/>
            <person name="Deegan J."/>
            <person name="Clutterbuck J."/>
            <person name="Andersen M.R."/>
            <person name="Archer D."/>
            <person name="Bencina M."/>
            <person name="Braus G."/>
            <person name="Coutinho P."/>
            <person name="von Dohren H."/>
            <person name="Doonan J."/>
            <person name="Driessen A.J."/>
            <person name="Durek P."/>
            <person name="Espeso E."/>
            <person name="Fekete E."/>
            <person name="Flipphi M."/>
            <person name="Estrada C.G."/>
            <person name="Geysens S."/>
            <person name="Goldman G."/>
            <person name="de Groot P.W."/>
            <person name="Hansen K."/>
            <person name="Harris S.D."/>
            <person name="Heinekamp T."/>
            <person name="Helmstaedt K."/>
            <person name="Henrissat B."/>
            <person name="Hofmann G."/>
            <person name="Homan T."/>
            <person name="Horio T."/>
            <person name="Horiuchi H."/>
            <person name="James S."/>
            <person name="Jones M."/>
            <person name="Karaffa L."/>
            <person name="Karanyi Z."/>
            <person name="Kato M."/>
            <person name="Keller N."/>
            <person name="Kelly D.E."/>
            <person name="Kiel J.A."/>
            <person name="Kim J.M."/>
            <person name="van der Klei I.J."/>
            <person name="Klis F.M."/>
            <person name="Kovalchuk A."/>
            <person name="Krasevec N."/>
            <person name="Kubicek C.P."/>
            <person name="Liu B."/>
            <person name="Maccabe A."/>
            <person name="Meyer V."/>
            <person name="Mirabito P."/>
            <person name="Miskei M."/>
            <person name="Mos M."/>
            <person name="Mullins J."/>
            <person name="Nelson D.R."/>
            <person name="Nielsen J."/>
            <person name="Oakley B.R."/>
            <person name="Osmani S.A."/>
            <person name="Pakula T."/>
            <person name="Paszewski A."/>
            <person name="Paulsen I."/>
            <person name="Pilsyk S."/>
            <person name="Pocsi I."/>
            <person name="Punt P.J."/>
            <person name="Ram A.F."/>
            <person name="Ren Q."/>
            <person name="Robellet X."/>
            <person name="Robson G."/>
            <person name="Seiboth B."/>
            <person name="van Solingen P."/>
            <person name="Specht T."/>
            <person name="Sun J."/>
            <person name="Taheri-Talesh N."/>
            <person name="Takeshita N."/>
            <person name="Ussery D."/>
            <person name="vanKuyk P.A."/>
            <person name="Visser H."/>
            <person name="van de Vondervoort P.J."/>
            <person name="de Vries R.P."/>
            <person name="Walton J."/>
            <person name="Xiang X."/>
            <person name="Xiong Y."/>
            <person name="Zeng A.P."/>
            <person name="Brandt B.W."/>
            <person name="Cornell M.J."/>
            <person name="van den Hondel C.A."/>
            <person name="Visser J."/>
            <person name="Oliver S.G."/>
            <person name="Turner G."/>
        </authorList>
    </citation>
    <scope>GENOME REANNOTATION</scope>
    <source>
        <strain>FGSC A4 / ATCC 38163 / CBS 112.46 / NRRL 194 / M139</strain>
    </source>
</reference>
<dbReference type="EC" id="3.7.1.3" evidence="1"/>
<dbReference type="EMBL" id="AACD01000101">
    <property type="protein sequence ID" value="EAA57815.1"/>
    <property type="molecule type" value="Genomic_DNA"/>
</dbReference>
<dbReference type="EMBL" id="BN001301">
    <property type="protein sequence ID" value="CBF70497.1"/>
    <property type="molecule type" value="Genomic_DNA"/>
</dbReference>
<dbReference type="RefSeq" id="XP_663556.1">
    <property type="nucleotide sequence ID" value="XM_658464.1"/>
</dbReference>
<dbReference type="SMR" id="Q5B0H8"/>
<dbReference type="FunCoup" id="Q5B0H8">
    <property type="interactions" value="208"/>
</dbReference>
<dbReference type="STRING" id="227321.Q5B0H8"/>
<dbReference type="EnsemblFungi" id="CBF70497">
    <property type="protein sequence ID" value="CBF70497"/>
    <property type="gene ID" value="ANIA_05952"/>
</dbReference>
<dbReference type="KEGG" id="ani:ANIA_05952"/>
<dbReference type="eggNOG" id="KOG3846">
    <property type="taxonomic scope" value="Eukaryota"/>
</dbReference>
<dbReference type="HOGENOM" id="CLU_003433_4_0_1"/>
<dbReference type="InParanoid" id="Q5B0H8"/>
<dbReference type="OMA" id="YTEVWEF"/>
<dbReference type="OrthoDB" id="5978656at2759"/>
<dbReference type="UniPathway" id="UPA00253">
    <property type="reaction ID" value="UER00329"/>
</dbReference>
<dbReference type="UniPathway" id="UPA00334">
    <property type="reaction ID" value="UER00455"/>
</dbReference>
<dbReference type="Proteomes" id="UP000000560">
    <property type="component" value="Chromosome I"/>
</dbReference>
<dbReference type="GO" id="GO:0005737">
    <property type="term" value="C:cytoplasm"/>
    <property type="evidence" value="ECO:0000318"/>
    <property type="project" value="GO_Central"/>
</dbReference>
<dbReference type="GO" id="GO:0030429">
    <property type="term" value="F:kynureninase activity"/>
    <property type="evidence" value="ECO:0000318"/>
    <property type="project" value="GO_Central"/>
</dbReference>
<dbReference type="GO" id="GO:0030170">
    <property type="term" value="F:pyridoxal phosphate binding"/>
    <property type="evidence" value="ECO:0007669"/>
    <property type="project" value="UniProtKB-UniRule"/>
</dbReference>
<dbReference type="GO" id="GO:0034354">
    <property type="term" value="P:'de novo' NAD biosynthetic process from L-tryptophan"/>
    <property type="evidence" value="ECO:0007669"/>
    <property type="project" value="UniProtKB-UniRule"/>
</dbReference>
<dbReference type="GO" id="GO:0043420">
    <property type="term" value="P:anthranilate metabolic process"/>
    <property type="evidence" value="ECO:0000318"/>
    <property type="project" value="GO_Central"/>
</dbReference>
<dbReference type="GO" id="GO:0097053">
    <property type="term" value="P:L-kynurenine catabolic process"/>
    <property type="evidence" value="ECO:0007669"/>
    <property type="project" value="UniProtKB-UniRule"/>
</dbReference>
<dbReference type="GO" id="GO:0019441">
    <property type="term" value="P:L-tryptophan catabolic process to kynurenine"/>
    <property type="evidence" value="ECO:0000318"/>
    <property type="project" value="GO_Central"/>
</dbReference>
<dbReference type="GO" id="GO:0019805">
    <property type="term" value="P:quinolinate biosynthetic process"/>
    <property type="evidence" value="ECO:0007669"/>
    <property type="project" value="UniProtKB-UniRule"/>
</dbReference>
<dbReference type="FunFam" id="3.40.640.10:FF:000031">
    <property type="entry name" value="Kynureninase"/>
    <property type="match status" value="1"/>
</dbReference>
<dbReference type="Gene3D" id="3.90.1150.10">
    <property type="entry name" value="Aspartate Aminotransferase, domain 1"/>
    <property type="match status" value="1"/>
</dbReference>
<dbReference type="Gene3D" id="3.40.640.10">
    <property type="entry name" value="Type I PLP-dependent aspartate aminotransferase-like (Major domain)"/>
    <property type="match status" value="1"/>
</dbReference>
<dbReference type="HAMAP" id="MF_01970">
    <property type="entry name" value="Kynureninase"/>
    <property type="match status" value="1"/>
</dbReference>
<dbReference type="InterPro" id="IPR010111">
    <property type="entry name" value="Kynureninase"/>
</dbReference>
<dbReference type="InterPro" id="IPR015424">
    <property type="entry name" value="PyrdxlP-dep_Trfase"/>
</dbReference>
<dbReference type="InterPro" id="IPR015421">
    <property type="entry name" value="PyrdxlP-dep_Trfase_major"/>
</dbReference>
<dbReference type="InterPro" id="IPR015422">
    <property type="entry name" value="PyrdxlP-dep_Trfase_small"/>
</dbReference>
<dbReference type="NCBIfam" id="TIGR01814">
    <property type="entry name" value="kynureninase"/>
    <property type="match status" value="1"/>
</dbReference>
<dbReference type="PANTHER" id="PTHR14084">
    <property type="entry name" value="KYNURENINASE"/>
    <property type="match status" value="1"/>
</dbReference>
<dbReference type="PANTHER" id="PTHR14084:SF0">
    <property type="entry name" value="KYNURENINASE"/>
    <property type="match status" value="1"/>
</dbReference>
<dbReference type="Pfam" id="PF22580">
    <property type="entry name" value="KYNU_C"/>
    <property type="match status" value="1"/>
</dbReference>
<dbReference type="PIRSF" id="PIRSF038800">
    <property type="entry name" value="KYNU"/>
    <property type="match status" value="1"/>
</dbReference>
<dbReference type="SUPFAM" id="SSF53383">
    <property type="entry name" value="PLP-dependent transferases"/>
    <property type="match status" value="1"/>
</dbReference>
<comment type="function">
    <text evidence="1">Catalyzes the cleavage of L-kynurenine (L-Kyn) and L-3-hydroxykynurenine (L-3OHKyn) into anthranilic acid (AA) and 3-hydroxyanthranilic acid (3-OHAA), respectively.</text>
</comment>
<comment type="catalytic activity">
    <reaction evidence="1">
        <text>L-kynurenine + H2O = anthranilate + L-alanine + H(+)</text>
        <dbReference type="Rhea" id="RHEA:16813"/>
        <dbReference type="ChEBI" id="CHEBI:15377"/>
        <dbReference type="ChEBI" id="CHEBI:15378"/>
        <dbReference type="ChEBI" id="CHEBI:16567"/>
        <dbReference type="ChEBI" id="CHEBI:57959"/>
        <dbReference type="ChEBI" id="CHEBI:57972"/>
        <dbReference type="EC" id="3.7.1.3"/>
    </reaction>
</comment>
<comment type="catalytic activity">
    <reaction evidence="1">
        <text>3-hydroxy-L-kynurenine + H2O = 3-hydroxyanthranilate + L-alanine + H(+)</text>
        <dbReference type="Rhea" id="RHEA:25143"/>
        <dbReference type="ChEBI" id="CHEBI:15377"/>
        <dbReference type="ChEBI" id="CHEBI:15378"/>
        <dbReference type="ChEBI" id="CHEBI:36559"/>
        <dbReference type="ChEBI" id="CHEBI:57972"/>
        <dbReference type="ChEBI" id="CHEBI:58125"/>
        <dbReference type="EC" id="3.7.1.3"/>
    </reaction>
</comment>
<comment type="cofactor">
    <cofactor evidence="1">
        <name>pyridoxal 5'-phosphate</name>
        <dbReference type="ChEBI" id="CHEBI:597326"/>
    </cofactor>
</comment>
<comment type="pathway">
    <text evidence="1">Amino-acid degradation; L-kynurenine degradation; L-alanine and anthranilate from L-kynurenine: step 1/1.</text>
</comment>
<comment type="pathway">
    <text evidence="1">Cofactor biosynthesis; NAD(+) biosynthesis; quinolinate from L-kynurenine: step 2/3.</text>
</comment>
<comment type="subunit">
    <text evidence="1">Homodimer.</text>
</comment>
<comment type="subcellular location">
    <subcellularLocation>
        <location evidence="1">Cytoplasm</location>
    </subcellularLocation>
</comment>
<comment type="similarity">
    <text evidence="1">Belongs to the kynureninase family.</text>
</comment>
<protein>
    <recommendedName>
        <fullName evidence="1">Kynureninase 1</fullName>
        <ecNumber evidence="1">3.7.1.3</ecNumber>
    </recommendedName>
    <alternativeName>
        <fullName evidence="1">Biosynthesis of nicotinic acid protein 5-1</fullName>
    </alternativeName>
    <alternativeName>
        <fullName evidence="1">L-kynurenine hydrolase 1</fullName>
    </alternativeName>
</protein>
<keyword id="KW-0963">Cytoplasm</keyword>
<keyword id="KW-0378">Hydrolase</keyword>
<keyword id="KW-0662">Pyridine nucleotide biosynthesis</keyword>
<keyword id="KW-0663">Pyridoxal phosphate</keyword>
<keyword id="KW-1185">Reference proteome</keyword>
<organism>
    <name type="scientific">Emericella nidulans (strain FGSC A4 / ATCC 38163 / CBS 112.46 / NRRL 194 / M139)</name>
    <name type="common">Aspergillus nidulans</name>
    <dbReference type="NCBI Taxonomy" id="227321"/>
    <lineage>
        <taxon>Eukaryota</taxon>
        <taxon>Fungi</taxon>
        <taxon>Dikarya</taxon>
        <taxon>Ascomycota</taxon>
        <taxon>Pezizomycotina</taxon>
        <taxon>Eurotiomycetes</taxon>
        <taxon>Eurotiomycetidae</taxon>
        <taxon>Eurotiales</taxon>
        <taxon>Aspergillaceae</taxon>
        <taxon>Aspergillus</taxon>
        <taxon>Aspergillus subgen. Nidulantes</taxon>
    </lineage>
</organism>
<proteinExistence type="inferred from homology"/>
<gene>
    <name type="primary">bna5-1</name>
    <name type="ORF">AN5952</name>
</gene>
<accession>Q5B0H8</accession>
<accession>C8V3G6</accession>
<evidence type="ECO:0000255" key="1">
    <source>
        <dbReference type="HAMAP-Rule" id="MF_03017"/>
    </source>
</evidence>
<feature type="chain" id="PRO_0000356977" description="Kynureninase 1">
    <location>
        <begin position="1"/>
        <end position="487"/>
    </location>
</feature>
<feature type="binding site" evidence="1">
    <location>
        <position position="149"/>
    </location>
    <ligand>
        <name>pyridoxal 5'-phosphate</name>
        <dbReference type="ChEBI" id="CHEBI:597326"/>
    </ligand>
</feature>
<feature type="binding site" evidence="1">
    <location>
        <position position="150"/>
    </location>
    <ligand>
        <name>pyridoxal 5'-phosphate</name>
        <dbReference type="ChEBI" id="CHEBI:597326"/>
    </ligand>
</feature>
<feature type="binding site" evidence="1">
    <location>
        <begin position="177"/>
        <end position="180"/>
    </location>
    <ligand>
        <name>pyridoxal 5'-phosphate</name>
        <dbReference type="ChEBI" id="CHEBI:597326"/>
    </ligand>
</feature>
<feature type="binding site" evidence="1">
    <location>
        <position position="234"/>
    </location>
    <ligand>
        <name>pyridoxal 5'-phosphate</name>
        <dbReference type="ChEBI" id="CHEBI:597326"/>
    </ligand>
</feature>
<feature type="binding site" evidence="1">
    <location>
        <position position="263"/>
    </location>
    <ligand>
        <name>pyridoxal 5'-phosphate</name>
        <dbReference type="ChEBI" id="CHEBI:597326"/>
    </ligand>
</feature>
<feature type="binding site" evidence="1">
    <location>
        <position position="266"/>
    </location>
    <ligand>
        <name>pyridoxal 5'-phosphate</name>
        <dbReference type="ChEBI" id="CHEBI:597326"/>
    </ligand>
</feature>
<feature type="binding site" evidence="1">
    <location>
        <position position="288"/>
    </location>
    <ligand>
        <name>pyridoxal 5'-phosphate</name>
        <dbReference type="ChEBI" id="CHEBI:597326"/>
    </ligand>
</feature>
<feature type="binding site" evidence="1">
    <location>
        <position position="329"/>
    </location>
    <ligand>
        <name>pyridoxal 5'-phosphate</name>
        <dbReference type="ChEBI" id="CHEBI:597326"/>
    </ligand>
</feature>
<feature type="binding site" evidence="1">
    <location>
        <position position="357"/>
    </location>
    <ligand>
        <name>pyridoxal 5'-phosphate</name>
        <dbReference type="ChEBI" id="CHEBI:597326"/>
    </ligand>
</feature>
<feature type="modified residue" description="N6-(pyridoxal phosphate)lysine" evidence="1">
    <location>
        <position position="289"/>
    </location>
</feature>
<sequence length="487" mass="54517">MGSRLHVQQIKNGPPLPYKDDIRAFTRDYAASLDAQDPLSHFREEFIIPSVKDLKRKTLDPSEGEYSSMYLDARCIYLCGNSLGLQPRNTKKYINYYLRTWAIKGVTGHFTHHDDELLPPFVDVDSAGAKLMAPVVGALESEVAVMGSLTTNLHLLMASFYRPTTERYKIIIEGKAFPSDHYAVESQIKHHNLQPKDAMVLIEPQDPEHPILETDRILRVIDEHASTTALLLLSAIQYYTGQYFNIEKITAHAQSKGIVVGWDCAHAAGNVDLKLHDWNVDFAAWCNYKYLNSGPGGMAGIFVHEKHGEVKAGQGDGELELFRPRLSGWWGGDKATRFLMDNHFVPQSGAAGYQLSNPSVLDMNAVVASLELFNRTSMAEIRQKSLNLTGYLEHLLLASLDGVSDKPFSIITPPNPSERGAQLSLRLAPGLLDSVLETLEEYAVVIDERKPDVIRVAPAPLYNTYEEVWQFCQIFSEACRKALEKKD</sequence>
<name>KYNU1_EMENI</name>